<organism>
    <name type="scientific">Streptococcus thermophilus (strain ATCC BAA-491 / LMD-9)</name>
    <dbReference type="NCBI Taxonomy" id="322159"/>
    <lineage>
        <taxon>Bacteria</taxon>
        <taxon>Bacillati</taxon>
        <taxon>Bacillota</taxon>
        <taxon>Bacilli</taxon>
        <taxon>Lactobacillales</taxon>
        <taxon>Streptococcaceae</taxon>
        <taxon>Streptococcus</taxon>
    </lineage>
</organism>
<feature type="chain" id="PRO_0000319535" description="ATP phosphoribosyltransferase">
    <location>
        <begin position="1"/>
        <end position="216"/>
    </location>
</feature>
<reference key="1">
    <citation type="journal article" date="2006" name="Proc. Natl. Acad. Sci. U.S.A.">
        <title>Comparative genomics of the lactic acid bacteria.</title>
        <authorList>
            <person name="Makarova K.S."/>
            <person name="Slesarev A."/>
            <person name="Wolf Y.I."/>
            <person name="Sorokin A."/>
            <person name="Mirkin B."/>
            <person name="Koonin E.V."/>
            <person name="Pavlov A."/>
            <person name="Pavlova N."/>
            <person name="Karamychev V."/>
            <person name="Polouchine N."/>
            <person name="Shakhova V."/>
            <person name="Grigoriev I."/>
            <person name="Lou Y."/>
            <person name="Rohksar D."/>
            <person name="Lucas S."/>
            <person name="Huang K."/>
            <person name="Goodstein D.M."/>
            <person name="Hawkins T."/>
            <person name="Plengvidhya V."/>
            <person name="Welker D."/>
            <person name="Hughes J."/>
            <person name="Goh Y."/>
            <person name="Benson A."/>
            <person name="Baldwin K."/>
            <person name="Lee J.-H."/>
            <person name="Diaz-Muniz I."/>
            <person name="Dosti B."/>
            <person name="Smeianov V."/>
            <person name="Wechter W."/>
            <person name="Barabote R."/>
            <person name="Lorca G."/>
            <person name="Altermann E."/>
            <person name="Barrangou R."/>
            <person name="Ganesan B."/>
            <person name="Xie Y."/>
            <person name="Rawsthorne H."/>
            <person name="Tamir D."/>
            <person name="Parker C."/>
            <person name="Breidt F."/>
            <person name="Broadbent J.R."/>
            <person name="Hutkins R."/>
            <person name="O'Sullivan D."/>
            <person name="Steele J."/>
            <person name="Unlu G."/>
            <person name="Saier M.H. Jr."/>
            <person name="Klaenhammer T."/>
            <person name="Richardson P."/>
            <person name="Kozyavkin S."/>
            <person name="Weimer B.C."/>
            <person name="Mills D.A."/>
        </authorList>
    </citation>
    <scope>NUCLEOTIDE SEQUENCE [LARGE SCALE GENOMIC DNA]</scope>
    <source>
        <strain>ATCC BAA-491 / LMD-9</strain>
    </source>
</reference>
<dbReference type="EC" id="2.4.2.17" evidence="1"/>
<dbReference type="EMBL" id="CP000419">
    <property type="protein sequence ID" value="ABJ66395.1"/>
    <property type="molecule type" value="Genomic_DNA"/>
</dbReference>
<dbReference type="RefSeq" id="WP_011681270.1">
    <property type="nucleotide sequence ID" value="NC_008532.1"/>
</dbReference>
<dbReference type="SMR" id="Q03K77"/>
<dbReference type="KEGG" id="ste:STER_1205"/>
<dbReference type="HOGENOM" id="CLU_038115_2_0_9"/>
<dbReference type="UniPathway" id="UPA00031">
    <property type="reaction ID" value="UER00006"/>
</dbReference>
<dbReference type="GO" id="GO:0005737">
    <property type="term" value="C:cytoplasm"/>
    <property type="evidence" value="ECO:0007669"/>
    <property type="project" value="UniProtKB-SubCell"/>
</dbReference>
<dbReference type="GO" id="GO:0005524">
    <property type="term" value="F:ATP binding"/>
    <property type="evidence" value="ECO:0007669"/>
    <property type="project" value="UniProtKB-KW"/>
</dbReference>
<dbReference type="GO" id="GO:0003879">
    <property type="term" value="F:ATP phosphoribosyltransferase activity"/>
    <property type="evidence" value="ECO:0007669"/>
    <property type="project" value="UniProtKB-UniRule"/>
</dbReference>
<dbReference type="GO" id="GO:0000105">
    <property type="term" value="P:L-histidine biosynthetic process"/>
    <property type="evidence" value="ECO:0007669"/>
    <property type="project" value="UniProtKB-UniRule"/>
</dbReference>
<dbReference type="CDD" id="cd13595">
    <property type="entry name" value="PBP2_HisGs"/>
    <property type="match status" value="1"/>
</dbReference>
<dbReference type="FunFam" id="3.40.190.10:FF:000008">
    <property type="entry name" value="ATP phosphoribosyltransferase"/>
    <property type="match status" value="1"/>
</dbReference>
<dbReference type="FunFam" id="3.40.190.10:FF:000011">
    <property type="entry name" value="ATP phosphoribosyltransferase"/>
    <property type="match status" value="1"/>
</dbReference>
<dbReference type="Gene3D" id="3.40.190.10">
    <property type="entry name" value="Periplasmic binding protein-like II"/>
    <property type="match status" value="2"/>
</dbReference>
<dbReference type="HAMAP" id="MF_01018">
    <property type="entry name" value="HisG_Short"/>
    <property type="match status" value="1"/>
</dbReference>
<dbReference type="InterPro" id="IPR013820">
    <property type="entry name" value="ATP_PRibTrfase_cat"/>
</dbReference>
<dbReference type="InterPro" id="IPR018198">
    <property type="entry name" value="ATP_PRibTrfase_CS"/>
</dbReference>
<dbReference type="InterPro" id="IPR001348">
    <property type="entry name" value="ATP_PRibTrfase_HisG"/>
</dbReference>
<dbReference type="InterPro" id="IPR024893">
    <property type="entry name" value="ATP_PRibTrfase_HisG_short"/>
</dbReference>
<dbReference type="NCBIfam" id="TIGR00070">
    <property type="entry name" value="hisG"/>
    <property type="match status" value="1"/>
</dbReference>
<dbReference type="PANTHER" id="PTHR21403:SF8">
    <property type="entry name" value="ATP PHOSPHORIBOSYLTRANSFERASE"/>
    <property type="match status" value="1"/>
</dbReference>
<dbReference type="PANTHER" id="PTHR21403">
    <property type="entry name" value="ATP PHOSPHORIBOSYLTRANSFERASE ATP-PRTASE"/>
    <property type="match status" value="1"/>
</dbReference>
<dbReference type="Pfam" id="PF01634">
    <property type="entry name" value="HisG"/>
    <property type="match status" value="1"/>
</dbReference>
<dbReference type="SUPFAM" id="SSF53850">
    <property type="entry name" value="Periplasmic binding protein-like II"/>
    <property type="match status" value="1"/>
</dbReference>
<dbReference type="PROSITE" id="PS01316">
    <property type="entry name" value="ATP_P_PHORIBOSYLTR"/>
    <property type="match status" value="1"/>
</dbReference>
<proteinExistence type="inferred from homology"/>
<gene>
    <name evidence="1" type="primary">hisG</name>
    <name type="ordered locus">STER_1205</name>
</gene>
<comment type="function">
    <text evidence="1">Catalyzes the condensation of ATP and 5-phosphoribose 1-diphosphate to form N'-(5'-phosphoribosyl)-ATP (PR-ATP). Has a crucial role in the pathway because the rate of histidine biosynthesis seems to be controlled primarily by regulation of HisG enzymatic activity.</text>
</comment>
<comment type="catalytic activity">
    <reaction evidence="1">
        <text>1-(5-phospho-beta-D-ribosyl)-ATP + diphosphate = 5-phospho-alpha-D-ribose 1-diphosphate + ATP</text>
        <dbReference type="Rhea" id="RHEA:18473"/>
        <dbReference type="ChEBI" id="CHEBI:30616"/>
        <dbReference type="ChEBI" id="CHEBI:33019"/>
        <dbReference type="ChEBI" id="CHEBI:58017"/>
        <dbReference type="ChEBI" id="CHEBI:73183"/>
        <dbReference type="EC" id="2.4.2.17"/>
    </reaction>
</comment>
<comment type="pathway">
    <text evidence="1">Amino-acid biosynthesis; L-histidine biosynthesis; L-histidine from 5-phospho-alpha-D-ribose 1-diphosphate: step 1/9.</text>
</comment>
<comment type="subunit">
    <text evidence="1">Heteromultimer composed of HisG and HisZ subunits.</text>
</comment>
<comment type="subcellular location">
    <subcellularLocation>
        <location evidence="1">Cytoplasm</location>
    </subcellularLocation>
</comment>
<comment type="domain">
    <text>Lacks the C-terminal regulatory region which is replaced by HisZ.</text>
</comment>
<comment type="similarity">
    <text evidence="1">Belongs to the ATP phosphoribosyltransferase family. Short subfamily.</text>
</comment>
<keyword id="KW-0028">Amino-acid biosynthesis</keyword>
<keyword id="KW-0067">ATP-binding</keyword>
<keyword id="KW-0963">Cytoplasm</keyword>
<keyword id="KW-0328">Glycosyltransferase</keyword>
<keyword id="KW-0368">Histidine biosynthesis</keyword>
<keyword id="KW-0547">Nucleotide-binding</keyword>
<keyword id="KW-0808">Transferase</keyword>
<name>HIS1_STRTD</name>
<accession>Q03K77</accession>
<protein>
    <recommendedName>
        <fullName evidence="1">ATP phosphoribosyltransferase</fullName>
        <shortName evidence="1">ATP-PRT</shortName>
        <shortName evidence="1">ATP-PRTase</shortName>
        <ecNumber evidence="1">2.4.2.17</ecNumber>
    </recommendedName>
</protein>
<evidence type="ECO:0000255" key="1">
    <source>
        <dbReference type="HAMAP-Rule" id="MF_01018"/>
    </source>
</evidence>
<sequence>MTSNQITIALTKGRIEKDAVTLLEKAGFNMSFMADKGRNLIFESPDNRFRFLLVKAPDVTTYVRHGVADIGIVGKDVLVEHPTGYLEMLDLNFGLCKFCVASTEDYNPNDHKRKRIATKYPTIATDYFNQKGEDVEIISIQGSVEIAPVIGLADAIVDIVETGSTLVANGLKVYEDICRISARMIVNKASLKNNKEVLQFIRKIESLVGNEEVPFE</sequence>